<reference key="1">
    <citation type="submission" date="2007-11" db="EMBL/GenBank/DDBJ databases">
        <title>The genome sequence of the hyperthermophilic bacterium Thermotoga neapolitana.</title>
        <authorList>
            <person name="Lim S.K."/>
            <person name="Kim J.S."/>
            <person name="Cha S.H."/>
            <person name="Park B.C."/>
            <person name="Lee D.S."/>
            <person name="Tae H.S."/>
            <person name="Kim S.-J."/>
            <person name="Kim J.J."/>
            <person name="Park K.J."/>
            <person name="Lee S.Y."/>
        </authorList>
    </citation>
    <scope>NUCLEOTIDE SEQUENCE [LARGE SCALE GENOMIC DNA]</scope>
    <source>
        <strain>ATCC 49049 / DSM 4359 / NBRC 107923 / NS-E</strain>
    </source>
</reference>
<gene>
    <name evidence="1" type="primary">disA</name>
    <name type="ordered locus">CTN_0486</name>
</gene>
<proteinExistence type="inferred from homology"/>
<organism>
    <name type="scientific">Thermotoga neapolitana (strain ATCC 49049 / DSM 4359 / NBRC 107923 / NS-E)</name>
    <dbReference type="NCBI Taxonomy" id="309803"/>
    <lineage>
        <taxon>Bacteria</taxon>
        <taxon>Thermotogati</taxon>
        <taxon>Thermotogota</taxon>
        <taxon>Thermotogae</taxon>
        <taxon>Thermotogales</taxon>
        <taxon>Thermotogaceae</taxon>
        <taxon>Thermotoga</taxon>
    </lineage>
</organism>
<feature type="chain" id="PRO_1000184913" description="DNA integrity scanning protein DisA">
    <location>
        <begin position="1"/>
        <end position="352"/>
    </location>
</feature>
<feature type="domain" description="DAC" evidence="2">
    <location>
        <begin position="3"/>
        <end position="143"/>
    </location>
</feature>
<feature type="binding site" evidence="1">
    <location>
        <position position="71"/>
    </location>
    <ligand>
        <name>ATP</name>
        <dbReference type="ChEBI" id="CHEBI:30616"/>
    </ligand>
</feature>
<feature type="binding site" evidence="1">
    <location>
        <position position="89"/>
    </location>
    <ligand>
        <name>ATP</name>
        <dbReference type="ChEBI" id="CHEBI:30616"/>
    </ligand>
</feature>
<feature type="binding site" evidence="1">
    <location>
        <begin position="102"/>
        <end position="106"/>
    </location>
    <ligand>
        <name>ATP</name>
        <dbReference type="ChEBI" id="CHEBI:30616"/>
    </ligand>
</feature>
<accession>B9K6S9</accession>
<name>DISA_THENN</name>
<sequence>MVPQELIEKIKLISPGTELRKALDDIISANFGALIFLVDDPKKYDDIIQGGFWLDTDFSAEKVYELSKMDGAIVLSEDLTRIYYANVHLVPDPTIPTGETGTRHRTAERLAKQTGKVVIAVSRRRNIISLYYKNYKYVVNQVDFLISKVTQAISTLEKYKDNFDKLLSDLEVLELENRVTLADVVRTLMKGVELLRITEETRPYIVELGEEGRLARMQLRELTEDVDDLMVLLIMDYSSDEVDEETAQAILQDFVTRREPSPISISRVLGYDVQQVSQLDDILVSARGYRLLKTAARIPISIGYNVVKMFKTLDQISKASVEDLKKVEGIGEKRAKAISESISSLKHRRTSE</sequence>
<evidence type="ECO:0000255" key="1">
    <source>
        <dbReference type="HAMAP-Rule" id="MF_01438"/>
    </source>
</evidence>
<evidence type="ECO:0000255" key="2">
    <source>
        <dbReference type="PROSITE-ProRule" id="PRU01130"/>
    </source>
</evidence>
<comment type="function">
    <text evidence="1">Participates in a DNA-damage check-point. DisA forms globular foci that rapidly scan along the chromosomes searching for lesions.</text>
</comment>
<comment type="function">
    <text evidence="1">Also has diadenylate cyclase activity, catalyzing the condensation of 2 ATP molecules into cyclic di-AMP (c-di-AMP). c-di-AMP likely acts as a signaling molecule that may couple DNA integrity with a cellular process.</text>
</comment>
<comment type="catalytic activity">
    <reaction evidence="1">
        <text>2 ATP = 3',3'-c-di-AMP + 2 diphosphate</text>
        <dbReference type="Rhea" id="RHEA:35655"/>
        <dbReference type="ChEBI" id="CHEBI:30616"/>
        <dbReference type="ChEBI" id="CHEBI:33019"/>
        <dbReference type="ChEBI" id="CHEBI:71500"/>
        <dbReference type="EC" id="2.7.7.85"/>
    </reaction>
</comment>
<comment type="cofactor">
    <cofactor evidence="1">
        <name>Mg(2+)</name>
        <dbReference type="ChEBI" id="CHEBI:18420"/>
    </cofactor>
</comment>
<comment type="subunit">
    <text evidence="1">Homooctamer.</text>
</comment>
<comment type="similarity">
    <text evidence="1">Belongs to the DisA family.</text>
</comment>
<keyword id="KW-0067">ATP-binding</keyword>
<keyword id="KW-0227">DNA damage</keyword>
<keyword id="KW-0234">DNA repair</keyword>
<keyword id="KW-0238">DNA-binding</keyword>
<keyword id="KW-0460">Magnesium</keyword>
<keyword id="KW-0547">Nucleotide-binding</keyword>
<keyword id="KW-0548">Nucleotidyltransferase</keyword>
<keyword id="KW-0808">Transferase</keyword>
<dbReference type="EC" id="2.7.7.85" evidence="1"/>
<dbReference type="EMBL" id="CP000916">
    <property type="protein sequence ID" value="ACM22662.1"/>
    <property type="molecule type" value="Genomic_DNA"/>
</dbReference>
<dbReference type="RefSeq" id="WP_015918981.1">
    <property type="nucleotide sequence ID" value="NC_011978.1"/>
</dbReference>
<dbReference type="SMR" id="B9K6S9"/>
<dbReference type="STRING" id="309803.CTN_0486"/>
<dbReference type="KEGG" id="tna:CTN_0486"/>
<dbReference type="eggNOG" id="COG1623">
    <property type="taxonomic scope" value="Bacteria"/>
</dbReference>
<dbReference type="HOGENOM" id="CLU_787128_0_0_0"/>
<dbReference type="Proteomes" id="UP000000445">
    <property type="component" value="Chromosome"/>
</dbReference>
<dbReference type="GO" id="GO:0004016">
    <property type="term" value="F:adenylate cyclase activity"/>
    <property type="evidence" value="ECO:0007669"/>
    <property type="project" value="TreeGrafter"/>
</dbReference>
<dbReference type="GO" id="GO:0005524">
    <property type="term" value="F:ATP binding"/>
    <property type="evidence" value="ECO:0007669"/>
    <property type="project" value="UniProtKB-UniRule"/>
</dbReference>
<dbReference type="GO" id="GO:0140097">
    <property type="term" value="F:catalytic activity, acting on DNA"/>
    <property type="evidence" value="ECO:0007669"/>
    <property type="project" value="UniProtKB-ARBA"/>
</dbReference>
<dbReference type="GO" id="GO:0106408">
    <property type="term" value="F:diadenylate cyclase activity"/>
    <property type="evidence" value="ECO:0007669"/>
    <property type="project" value="UniProtKB-EC"/>
</dbReference>
<dbReference type="GO" id="GO:0003677">
    <property type="term" value="F:DNA binding"/>
    <property type="evidence" value="ECO:0007669"/>
    <property type="project" value="UniProtKB-UniRule"/>
</dbReference>
<dbReference type="GO" id="GO:0016787">
    <property type="term" value="F:hydrolase activity"/>
    <property type="evidence" value="ECO:0007669"/>
    <property type="project" value="UniProtKB-ARBA"/>
</dbReference>
<dbReference type="GO" id="GO:0006281">
    <property type="term" value="P:DNA repair"/>
    <property type="evidence" value="ECO:0007669"/>
    <property type="project" value="UniProtKB-UniRule"/>
</dbReference>
<dbReference type="FunFam" id="3.40.1700.10:FF:000001">
    <property type="entry name" value="DNA integrity scanning protein DisA"/>
    <property type="match status" value="1"/>
</dbReference>
<dbReference type="Gene3D" id="1.10.150.20">
    <property type="entry name" value="5' to 3' exonuclease, C-terminal subdomain"/>
    <property type="match status" value="1"/>
</dbReference>
<dbReference type="Gene3D" id="1.20.1260.110">
    <property type="entry name" value="DNA integrity scanning linker region"/>
    <property type="match status" value="1"/>
</dbReference>
<dbReference type="Gene3D" id="3.40.1700.10">
    <property type="entry name" value="DNA integrity scanning protein, DisA, N-terminal domain"/>
    <property type="match status" value="1"/>
</dbReference>
<dbReference type="HAMAP" id="MF_01438">
    <property type="entry name" value="DisA"/>
    <property type="match status" value="1"/>
</dbReference>
<dbReference type="InterPro" id="IPR050338">
    <property type="entry name" value="DisA"/>
</dbReference>
<dbReference type="InterPro" id="IPR038331">
    <property type="entry name" value="DisA_sf"/>
</dbReference>
<dbReference type="InterPro" id="IPR036888">
    <property type="entry name" value="DNA_integrity_DisA_N_sf"/>
</dbReference>
<dbReference type="InterPro" id="IPR018906">
    <property type="entry name" value="DNA_integrity_scan_DisA_link"/>
</dbReference>
<dbReference type="InterPro" id="IPR003390">
    <property type="entry name" value="DNA_integrity_scan_DisA_N"/>
</dbReference>
<dbReference type="InterPro" id="IPR023763">
    <property type="entry name" value="DNA_integrity_scanning_protein"/>
</dbReference>
<dbReference type="InterPro" id="IPR000445">
    <property type="entry name" value="HhH_motif"/>
</dbReference>
<dbReference type="InterPro" id="IPR010994">
    <property type="entry name" value="RuvA_2-like"/>
</dbReference>
<dbReference type="NCBIfam" id="NF010009">
    <property type="entry name" value="PRK13482.1"/>
    <property type="match status" value="1"/>
</dbReference>
<dbReference type="PANTHER" id="PTHR34185">
    <property type="entry name" value="DIADENYLATE CYCLASE"/>
    <property type="match status" value="1"/>
</dbReference>
<dbReference type="PANTHER" id="PTHR34185:SF3">
    <property type="entry name" value="DNA INTEGRITY SCANNING PROTEIN DISA"/>
    <property type="match status" value="1"/>
</dbReference>
<dbReference type="Pfam" id="PF02457">
    <property type="entry name" value="DAC"/>
    <property type="match status" value="1"/>
</dbReference>
<dbReference type="Pfam" id="PF10635">
    <property type="entry name" value="DisA-linker"/>
    <property type="match status" value="1"/>
</dbReference>
<dbReference type="Pfam" id="PF00633">
    <property type="entry name" value="HHH"/>
    <property type="match status" value="1"/>
</dbReference>
<dbReference type="SUPFAM" id="SSF47781">
    <property type="entry name" value="RuvA domain 2-like"/>
    <property type="match status" value="1"/>
</dbReference>
<dbReference type="SUPFAM" id="SSF143597">
    <property type="entry name" value="YojJ-like"/>
    <property type="match status" value="1"/>
</dbReference>
<dbReference type="PROSITE" id="PS51794">
    <property type="entry name" value="DAC"/>
    <property type="match status" value="1"/>
</dbReference>
<protein>
    <recommendedName>
        <fullName evidence="1">DNA integrity scanning protein DisA</fullName>
    </recommendedName>
    <alternativeName>
        <fullName evidence="1">Cyclic di-AMP synthase</fullName>
        <shortName evidence="1">c-di-AMP synthase</shortName>
    </alternativeName>
    <alternativeName>
        <fullName evidence="1">Diadenylate cyclase</fullName>
        <ecNumber evidence="1">2.7.7.85</ecNumber>
    </alternativeName>
</protein>